<keyword id="KW-0227">DNA damage</keyword>
<keyword id="KW-0233">DNA recombination</keyword>
<keyword id="KW-0234">DNA repair</keyword>
<keyword id="KW-0479">Metal-binding</keyword>
<keyword id="KW-0862">Zinc</keyword>
<keyword id="KW-0863">Zinc-finger</keyword>
<reference key="1">
    <citation type="journal article" date="2010" name="Genome Biol.">
        <title>Structure and dynamics of the pan-genome of Streptococcus pneumoniae and closely related species.</title>
        <authorList>
            <person name="Donati C."/>
            <person name="Hiller N.L."/>
            <person name="Tettelin H."/>
            <person name="Muzzi A."/>
            <person name="Croucher N.J."/>
            <person name="Angiuoli S.V."/>
            <person name="Oggioni M."/>
            <person name="Dunning Hotopp J.C."/>
            <person name="Hu F.Z."/>
            <person name="Riley D.R."/>
            <person name="Covacci A."/>
            <person name="Mitchell T.J."/>
            <person name="Bentley S.D."/>
            <person name="Kilian M."/>
            <person name="Ehrlich G.D."/>
            <person name="Rappuoli R."/>
            <person name="Moxon E.R."/>
            <person name="Masignani V."/>
        </authorList>
    </citation>
    <scope>NUCLEOTIDE SEQUENCE [LARGE SCALE GENOMIC DNA]</scope>
    <source>
        <strain>JJA</strain>
    </source>
</reference>
<comment type="function">
    <text evidence="1">May play a role in DNA repair. It seems to be involved in an RecBC-independent recombinational process of DNA repair. It may act with RecF and RecO.</text>
</comment>
<comment type="similarity">
    <text evidence="1">Belongs to the RecR family.</text>
</comment>
<feature type="chain" id="PRO_1000195413" description="Recombination protein RecR">
    <location>
        <begin position="1"/>
        <end position="198"/>
    </location>
</feature>
<feature type="domain" description="Toprim" evidence="1">
    <location>
        <begin position="80"/>
        <end position="175"/>
    </location>
</feature>
<feature type="zinc finger region" description="C4-type" evidence="1">
    <location>
        <begin position="57"/>
        <end position="72"/>
    </location>
</feature>
<accession>C1CFP3</accession>
<sequence length="198" mass="21679">MLYPTPIAKLIDSYSKLPGIGIKTATRLAFYTIGMSADDVNEFAKNLLSAKRELTYCSICGRLTDDDPCSICTDSTRDQTTILVLEDSRDVAAMENIQEYHGLYHVLHGLISPMNGISPDDINLKSLMTRLMDSEVSEVIVATNATADGEATSMYLSRLLKPAGIKVTRLARGLAVGADIEYADEVTLLRAIENRTEL</sequence>
<proteinExistence type="inferred from homology"/>
<name>RECR_STRZJ</name>
<organism>
    <name type="scientific">Streptococcus pneumoniae (strain JJA)</name>
    <dbReference type="NCBI Taxonomy" id="488222"/>
    <lineage>
        <taxon>Bacteria</taxon>
        <taxon>Bacillati</taxon>
        <taxon>Bacillota</taxon>
        <taxon>Bacilli</taxon>
        <taxon>Lactobacillales</taxon>
        <taxon>Streptococcaceae</taxon>
        <taxon>Streptococcus</taxon>
    </lineage>
</organism>
<gene>
    <name evidence="1" type="primary">recR</name>
    <name type="ordered locus">SPJ_1567</name>
</gene>
<evidence type="ECO:0000255" key="1">
    <source>
        <dbReference type="HAMAP-Rule" id="MF_00017"/>
    </source>
</evidence>
<dbReference type="EMBL" id="CP000919">
    <property type="protein sequence ID" value="ACO18509.1"/>
    <property type="molecule type" value="Genomic_DNA"/>
</dbReference>
<dbReference type="RefSeq" id="WP_000966746.1">
    <property type="nucleotide sequence ID" value="NC_012466.1"/>
</dbReference>
<dbReference type="SMR" id="C1CFP3"/>
<dbReference type="KEGG" id="sjj:SPJ_1567"/>
<dbReference type="HOGENOM" id="CLU_060739_1_0_9"/>
<dbReference type="Proteomes" id="UP000002206">
    <property type="component" value="Chromosome"/>
</dbReference>
<dbReference type="GO" id="GO:0003677">
    <property type="term" value="F:DNA binding"/>
    <property type="evidence" value="ECO:0007669"/>
    <property type="project" value="UniProtKB-UniRule"/>
</dbReference>
<dbReference type="GO" id="GO:0008270">
    <property type="term" value="F:zinc ion binding"/>
    <property type="evidence" value="ECO:0007669"/>
    <property type="project" value="UniProtKB-KW"/>
</dbReference>
<dbReference type="GO" id="GO:0006310">
    <property type="term" value="P:DNA recombination"/>
    <property type="evidence" value="ECO:0007669"/>
    <property type="project" value="UniProtKB-UniRule"/>
</dbReference>
<dbReference type="GO" id="GO:0006281">
    <property type="term" value="P:DNA repair"/>
    <property type="evidence" value="ECO:0007669"/>
    <property type="project" value="UniProtKB-UniRule"/>
</dbReference>
<dbReference type="CDD" id="cd01025">
    <property type="entry name" value="TOPRIM_recR"/>
    <property type="match status" value="1"/>
</dbReference>
<dbReference type="Gene3D" id="3.30.60.80">
    <property type="match status" value="1"/>
</dbReference>
<dbReference type="Gene3D" id="3.40.1360.10">
    <property type="match status" value="1"/>
</dbReference>
<dbReference type="Gene3D" id="6.10.250.240">
    <property type="match status" value="1"/>
</dbReference>
<dbReference type="Gene3D" id="1.10.8.420">
    <property type="entry name" value="RecR Domain 1"/>
    <property type="match status" value="1"/>
</dbReference>
<dbReference type="HAMAP" id="MF_00017">
    <property type="entry name" value="RecR"/>
    <property type="match status" value="1"/>
</dbReference>
<dbReference type="InterPro" id="IPR000093">
    <property type="entry name" value="DNA_Rcmb_RecR"/>
</dbReference>
<dbReference type="InterPro" id="IPR023627">
    <property type="entry name" value="Rcmb_RecR"/>
</dbReference>
<dbReference type="InterPro" id="IPR015967">
    <property type="entry name" value="Rcmb_RecR_Znf"/>
</dbReference>
<dbReference type="InterPro" id="IPR006171">
    <property type="entry name" value="TOPRIM_dom"/>
</dbReference>
<dbReference type="InterPro" id="IPR034137">
    <property type="entry name" value="TOPRIM_RecR"/>
</dbReference>
<dbReference type="NCBIfam" id="TIGR00615">
    <property type="entry name" value="recR"/>
    <property type="match status" value="1"/>
</dbReference>
<dbReference type="PANTHER" id="PTHR30446">
    <property type="entry name" value="RECOMBINATION PROTEIN RECR"/>
    <property type="match status" value="1"/>
</dbReference>
<dbReference type="PANTHER" id="PTHR30446:SF0">
    <property type="entry name" value="RECOMBINATION PROTEIN RECR"/>
    <property type="match status" value="1"/>
</dbReference>
<dbReference type="Pfam" id="PF21175">
    <property type="entry name" value="RecR_C"/>
    <property type="match status" value="1"/>
</dbReference>
<dbReference type="Pfam" id="PF21176">
    <property type="entry name" value="RecR_HhH"/>
    <property type="match status" value="1"/>
</dbReference>
<dbReference type="Pfam" id="PF02132">
    <property type="entry name" value="RecR_ZnF"/>
    <property type="match status" value="1"/>
</dbReference>
<dbReference type="Pfam" id="PF13662">
    <property type="entry name" value="Toprim_4"/>
    <property type="match status" value="1"/>
</dbReference>
<dbReference type="SMART" id="SM00493">
    <property type="entry name" value="TOPRIM"/>
    <property type="match status" value="1"/>
</dbReference>
<dbReference type="SUPFAM" id="SSF111304">
    <property type="entry name" value="Recombination protein RecR"/>
    <property type="match status" value="1"/>
</dbReference>
<dbReference type="PROSITE" id="PS01300">
    <property type="entry name" value="RECR"/>
    <property type="match status" value="1"/>
</dbReference>
<dbReference type="PROSITE" id="PS50880">
    <property type="entry name" value="TOPRIM"/>
    <property type="match status" value="1"/>
</dbReference>
<protein>
    <recommendedName>
        <fullName evidence="1">Recombination protein RecR</fullName>
    </recommendedName>
</protein>